<keyword id="KW-1185">Reference proteome</keyword>
<feature type="chain" id="PRO_0000049491" description="Uncharacterized protein YdcF">
    <location>
        <begin position="1"/>
        <end position="97"/>
    </location>
</feature>
<name>YDCF_BACSU</name>
<gene>
    <name type="primary">ydcF</name>
    <name type="ordered locus">BSU04750</name>
</gene>
<reference key="1">
    <citation type="submission" date="1997-03" db="EMBL/GenBank/DDBJ databases">
        <title>A 148 kbp sequence of the region between 35 and 47 degree of the Bacillus subtilis genome.</title>
        <authorList>
            <person name="Kasahara Y."/>
            <person name="Nakai S."/>
            <person name="Lee S."/>
            <person name="Sadaie Y."/>
            <person name="Ogasawara N."/>
        </authorList>
    </citation>
    <scope>NUCLEOTIDE SEQUENCE [GENOMIC DNA]</scope>
    <source>
        <strain>168</strain>
    </source>
</reference>
<reference key="2">
    <citation type="journal article" date="1997" name="Nature">
        <title>The complete genome sequence of the Gram-positive bacterium Bacillus subtilis.</title>
        <authorList>
            <person name="Kunst F."/>
            <person name="Ogasawara N."/>
            <person name="Moszer I."/>
            <person name="Albertini A.M."/>
            <person name="Alloni G."/>
            <person name="Azevedo V."/>
            <person name="Bertero M.G."/>
            <person name="Bessieres P."/>
            <person name="Bolotin A."/>
            <person name="Borchert S."/>
            <person name="Borriss R."/>
            <person name="Boursier L."/>
            <person name="Brans A."/>
            <person name="Braun M."/>
            <person name="Brignell S.C."/>
            <person name="Bron S."/>
            <person name="Brouillet S."/>
            <person name="Bruschi C.V."/>
            <person name="Caldwell B."/>
            <person name="Capuano V."/>
            <person name="Carter N.M."/>
            <person name="Choi S.-K."/>
            <person name="Codani J.-J."/>
            <person name="Connerton I.F."/>
            <person name="Cummings N.J."/>
            <person name="Daniel R.A."/>
            <person name="Denizot F."/>
            <person name="Devine K.M."/>
            <person name="Duesterhoeft A."/>
            <person name="Ehrlich S.D."/>
            <person name="Emmerson P.T."/>
            <person name="Entian K.-D."/>
            <person name="Errington J."/>
            <person name="Fabret C."/>
            <person name="Ferrari E."/>
            <person name="Foulger D."/>
            <person name="Fritz C."/>
            <person name="Fujita M."/>
            <person name="Fujita Y."/>
            <person name="Fuma S."/>
            <person name="Galizzi A."/>
            <person name="Galleron N."/>
            <person name="Ghim S.-Y."/>
            <person name="Glaser P."/>
            <person name="Goffeau A."/>
            <person name="Golightly E.J."/>
            <person name="Grandi G."/>
            <person name="Guiseppi G."/>
            <person name="Guy B.J."/>
            <person name="Haga K."/>
            <person name="Haiech J."/>
            <person name="Harwood C.R."/>
            <person name="Henaut A."/>
            <person name="Hilbert H."/>
            <person name="Holsappel S."/>
            <person name="Hosono S."/>
            <person name="Hullo M.-F."/>
            <person name="Itaya M."/>
            <person name="Jones L.-M."/>
            <person name="Joris B."/>
            <person name="Karamata D."/>
            <person name="Kasahara Y."/>
            <person name="Klaerr-Blanchard M."/>
            <person name="Klein C."/>
            <person name="Kobayashi Y."/>
            <person name="Koetter P."/>
            <person name="Koningstein G."/>
            <person name="Krogh S."/>
            <person name="Kumano M."/>
            <person name="Kurita K."/>
            <person name="Lapidus A."/>
            <person name="Lardinois S."/>
            <person name="Lauber J."/>
            <person name="Lazarevic V."/>
            <person name="Lee S.-M."/>
            <person name="Levine A."/>
            <person name="Liu H."/>
            <person name="Masuda S."/>
            <person name="Mauel C."/>
            <person name="Medigue C."/>
            <person name="Medina N."/>
            <person name="Mellado R.P."/>
            <person name="Mizuno M."/>
            <person name="Moestl D."/>
            <person name="Nakai S."/>
            <person name="Noback M."/>
            <person name="Noone D."/>
            <person name="O'Reilly M."/>
            <person name="Ogawa K."/>
            <person name="Ogiwara A."/>
            <person name="Oudega B."/>
            <person name="Park S.-H."/>
            <person name="Parro V."/>
            <person name="Pohl T.M."/>
            <person name="Portetelle D."/>
            <person name="Porwollik S."/>
            <person name="Prescott A.M."/>
            <person name="Presecan E."/>
            <person name="Pujic P."/>
            <person name="Purnelle B."/>
            <person name="Rapoport G."/>
            <person name="Rey M."/>
            <person name="Reynolds S."/>
            <person name="Rieger M."/>
            <person name="Rivolta C."/>
            <person name="Rocha E."/>
            <person name="Roche B."/>
            <person name="Rose M."/>
            <person name="Sadaie Y."/>
            <person name="Sato T."/>
            <person name="Scanlan E."/>
            <person name="Schleich S."/>
            <person name="Schroeter R."/>
            <person name="Scoffone F."/>
            <person name="Sekiguchi J."/>
            <person name="Sekowska A."/>
            <person name="Seror S.J."/>
            <person name="Serror P."/>
            <person name="Shin B.-S."/>
            <person name="Soldo B."/>
            <person name="Sorokin A."/>
            <person name="Tacconi E."/>
            <person name="Takagi T."/>
            <person name="Takahashi H."/>
            <person name="Takemaru K."/>
            <person name="Takeuchi M."/>
            <person name="Tamakoshi A."/>
            <person name="Tanaka T."/>
            <person name="Terpstra P."/>
            <person name="Tognoni A."/>
            <person name="Tosato V."/>
            <person name="Uchiyama S."/>
            <person name="Vandenbol M."/>
            <person name="Vannier F."/>
            <person name="Vassarotti A."/>
            <person name="Viari A."/>
            <person name="Wambutt R."/>
            <person name="Wedler E."/>
            <person name="Wedler H."/>
            <person name="Weitzenegger T."/>
            <person name="Winters P."/>
            <person name="Wipat A."/>
            <person name="Yamamoto H."/>
            <person name="Yamane K."/>
            <person name="Yasumoto K."/>
            <person name="Yata K."/>
            <person name="Yoshida K."/>
            <person name="Yoshikawa H.-F."/>
            <person name="Zumstein E."/>
            <person name="Yoshikawa H."/>
            <person name="Danchin A."/>
        </authorList>
    </citation>
    <scope>NUCLEOTIDE SEQUENCE [LARGE SCALE GENOMIC DNA]</scope>
    <source>
        <strain>168</strain>
    </source>
</reference>
<proteinExistence type="predicted"/>
<organism>
    <name type="scientific">Bacillus subtilis (strain 168)</name>
    <dbReference type="NCBI Taxonomy" id="224308"/>
    <lineage>
        <taxon>Bacteria</taxon>
        <taxon>Bacillati</taxon>
        <taxon>Bacillota</taxon>
        <taxon>Bacilli</taxon>
        <taxon>Bacillales</taxon>
        <taxon>Bacillaceae</taxon>
        <taxon>Bacillus</taxon>
    </lineage>
</organism>
<dbReference type="EMBL" id="AB001488">
    <property type="protein sequence ID" value="BAA19312.1"/>
    <property type="molecule type" value="Genomic_DNA"/>
</dbReference>
<dbReference type="EMBL" id="AL009126">
    <property type="protein sequence ID" value="CAB12282.1"/>
    <property type="molecule type" value="Genomic_DNA"/>
</dbReference>
<dbReference type="PIR" id="D69773">
    <property type="entry name" value="D69773"/>
</dbReference>
<dbReference type="RefSeq" id="NP_388356.1">
    <property type="nucleotide sequence ID" value="NC_000964.3"/>
</dbReference>
<dbReference type="RefSeq" id="WP_010886412.1">
    <property type="nucleotide sequence ID" value="NC_000964.3"/>
</dbReference>
<dbReference type="SMR" id="P96623"/>
<dbReference type="FunCoup" id="P96623">
    <property type="interactions" value="38"/>
</dbReference>
<dbReference type="STRING" id="224308.BSU04750"/>
<dbReference type="PaxDb" id="224308-BSU04750"/>
<dbReference type="EnsemblBacteria" id="CAB12282">
    <property type="protein sequence ID" value="CAB12282"/>
    <property type="gene ID" value="BSU_04750"/>
</dbReference>
<dbReference type="GeneID" id="938158"/>
<dbReference type="KEGG" id="bsu:BSU04750"/>
<dbReference type="PATRIC" id="fig|224308.43.peg.497"/>
<dbReference type="InParanoid" id="P96623"/>
<dbReference type="OrthoDB" id="9808398at2"/>
<dbReference type="BioCyc" id="BSUB:BSU04750-MONOMER"/>
<dbReference type="Proteomes" id="UP000001570">
    <property type="component" value="Chromosome"/>
</dbReference>
<accession>P96623</accession>
<sequence length="97" mass="11241">MERKEHCFCKEKQFSYGLSMWRNIGRFLSWSTCPHSNVIMEFFHVLQKQKEDLCITYGIVLEGAEAKKWGEIIGTELSKDMPTAVSRLVHLYGGVIK</sequence>
<protein>
    <recommendedName>
        <fullName>Uncharacterized protein YdcF</fullName>
    </recommendedName>
</protein>